<protein>
    <recommendedName>
        <fullName evidence="1">Endoribonuclease YbeY</fullName>
        <ecNumber evidence="1">3.1.-.-</ecNumber>
    </recommendedName>
</protein>
<evidence type="ECO:0000255" key="1">
    <source>
        <dbReference type="HAMAP-Rule" id="MF_00009"/>
    </source>
</evidence>
<comment type="function">
    <text evidence="1">Single strand-specific metallo-endoribonuclease involved in late-stage 70S ribosome quality control and in maturation of the 3' terminus of the 16S rRNA.</text>
</comment>
<comment type="cofactor">
    <cofactor evidence="1">
        <name>Zn(2+)</name>
        <dbReference type="ChEBI" id="CHEBI:29105"/>
    </cofactor>
    <text evidence="1">Binds 1 zinc ion.</text>
</comment>
<comment type="subcellular location">
    <subcellularLocation>
        <location evidence="1">Cytoplasm</location>
    </subcellularLocation>
</comment>
<comment type="similarity">
    <text evidence="1">Belongs to the endoribonuclease YbeY family.</text>
</comment>
<dbReference type="EC" id="3.1.-.-" evidence="1"/>
<dbReference type="EMBL" id="AE000516">
    <property type="protein sequence ID" value="AAK46730.1"/>
    <property type="molecule type" value="Genomic_DNA"/>
</dbReference>
<dbReference type="PIR" id="F70586">
    <property type="entry name" value="F70586"/>
</dbReference>
<dbReference type="RefSeq" id="WP_003899292.1">
    <property type="nucleotide sequence ID" value="NZ_KK341227.1"/>
</dbReference>
<dbReference type="SMR" id="P9WGX8"/>
<dbReference type="KEGG" id="mtc:MT2436"/>
<dbReference type="HOGENOM" id="CLU_106710_3_2_11"/>
<dbReference type="Proteomes" id="UP000001020">
    <property type="component" value="Chromosome"/>
</dbReference>
<dbReference type="GO" id="GO:0005737">
    <property type="term" value="C:cytoplasm"/>
    <property type="evidence" value="ECO:0007669"/>
    <property type="project" value="UniProtKB-SubCell"/>
</dbReference>
<dbReference type="GO" id="GO:0004222">
    <property type="term" value="F:metalloendopeptidase activity"/>
    <property type="evidence" value="ECO:0007669"/>
    <property type="project" value="InterPro"/>
</dbReference>
<dbReference type="GO" id="GO:0004521">
    <property type="term" value="F:RNA endonuclease activity"/>
    <property type="evidence" value="ECO:0007669"/>
    <property type="project" value="UniProtKB-UniRule"/>
</dbReference>
<dbReference type="GO" id="GO:0008270">
    <property type="term" value="F:zinc ion binding"/>
    <property type="evidence" value="ECO:0007669"/>
    <property type="project" value="UniProtKB-UniRule"/>
</dbReference>
<dbReference type="GO" id="GO:0006364">
    <property type="term" value="P:rRNA processing"/>
    <property type="evidence" value="ECO:0007669"/>
    <property type="project" value="UniProtKB-UniRule"/>
</dbReference>
<dbReference type="Gene3D" id="3.40.390.30">
    <property type="entry name" value="Metalloproteases ('zincins'), catalytic domain"/>
    <property type="match status" value="1"/>
</dbReference>
<dbReference type="HAMAP" id="MF_00009">
    <property type="entry name" value="Endoribonucl_YbeY"/>
    <property type="match status" value="1"/>
</dbReference>
<dbReference type="InterPro" id="IPR023091">
    <property type="entry name" value="MetalPrtase_cat_dom_sf_prd"/>
</dbReference>
<dbReference type="InterPro" id="IPR002036">
    <property type="entry name" value="YbeY"/>
</dbReference>
<dbReference type="InterPro" id="IPR020549">
    <property type="entry name" value="YbeY_CS"/>
</dbReference>
<dbReference type="NCBIfam" id="TIGR00043">
    <property type="entry name" value="rRNA maturation RNase YbeY"/>
    <property type="match status" value="1"/>
</dbReference>
<dbReference type="PANTHER" id="PTHR46986">
    <property type="entry name" value="ENDORIBONUCLEASE YBEY, CHLOROPLASTIC"/>
    <property type="match status" value="1"/>
</dbReference>
<dbReference type="PANTHER" id="PTHR46986:SF1">
    <property type="entry name" value="ENDORIBONUCLEASE YBEY, CHLOROPLASTIC"/>
    <property type="match status" value="1"/>
</dbReference>
<dbReference type="Pfam" id="PF02130">
    <property type="entry name" value="YbeY"/>
    <property type="match status" value="1"/>
</dbReference>
<dbReference type="SUPFAM" id="SSF55486">
    <property type="entry name" value="Metalloproteases ('zincins'), catalytic domain"/>
    <property type="match status" value="1"/>
</dbReference>
<dbReference type="PROSITE" id="PS01306">
    <property type="entry name" value="UPF0054"/>
    <property type="match status" value="1"/>
</dbReference>
<feature type="chain" id="PRO_0000428284" description="Endoribonuclease YbeY">
    <location>
        <begin position="1"/>
        <end position="177"/>
    </location>
</feature>
<feature type="binding site" evidence="1">
    <location>
        <position position="118"/>
    </location>
    <ligand>
        <name>Zn(2+)</name>
        <dbReference type="ChEBI" id="CHEBI:29105"/>
        <note>catalytic</note>
    </ligand>
</feature>
<feature type="binding site" evidence="1">
    <location>
        <position position="122"/>
    </location>
    <ligand>
        <name>Zn(2+)</name>
        <dbReference type="ChEBI" id="CHEBI:29105"/>
        <note>catalytic</note>
    </ligand>
</feature>
<feature type="binding site" evidence="1">
    <location>
        <position position="128"/>
    </location>
    <ligand>
        <name>Zn(2+)</name>
        <dbReference type="ChEBI" id="CHEBI:29105"/>
        <note>catalytic</note>
    </ligand>
</feature>
<sequence>MSIEVANESGIDVSEAELVSVARFVIAKMDVNPCAELSMLLLDTAAMADLHMRWMDLPGPTDVMSFPMDELEPGGRPDAPEPGPSMLGDIVLCPEFAAEQAAAAGHSLGHELALLTIHGVLHLLGYDHAEPDEEKEMFALQDRLLEEWVADQVEAYQHDRQDEKDRRLLDKSRYFDL</sequence>
<name>YBEY_MYCTO</name>
<keyword id="KW-0963">Cytoplasm</keyword>
<keyword id="KW-0255">Endonuclease</keyword>
<keyword id="KW-0378">Hydrolase</keyword>
<keyword id="KW-0479">Metal-binding</keyword>
<keyword id="KW-0540">Nuclease</keyword>
<keyword id="KW-1185">Reference proteome</keyword>
<keyword id="KW-0690">Ribosome biogenesis</keyword>
<keyword id="KW-0698">rRNA processing</keyword>
<keyword id="KW-0862">Zinc</keyword>
<gene>
    <name evidence="1" type="primary">ybeY</name>
    <name type="ordered locus">MT2436</name>
</gene>
<organism>
    <name type="scientific">Mycobacterium tuberculosis (strain CDC 1551 / Oshkosh)</name>
    <dbReference type="NCBI Taxonomy" id="83331"/>
    <lineage>
        <taxon>Bacteria</taxon>
        <taxon>Bacillati</taxon>
        <taxon>Actinomycetota</taxon>
        <taxon>Actinomycetes</taxon>
        <taxon>Mycobacteriales</taxon>
        <taxon>Mycobacteriaceae</taxon>
        <taxon>Mycobacterium</taxon>
        <taxon>Mycobacterium tuberculosis complex</taxon>
    </lineage>
</organism>
<reference key="1">
    <citation type="journal article" date="2002" name="J. Bacteriol.">
        <title>Whole-genome comparison of Mycobacterium tuberculosis clinical and laboratory strains.</title>
        <authorList>
            <person name="Fleischmann R.D."/>
            <person name="Alland D."/>
            <person name="Eisen J.A."/>
            <person name="Carpenter L."/>
            <person name="White O."/>
            <person name="Peterson J.D."/>
            <person name="DeBoy R.T."/>
            <person name="Dodson R.J."/>
            <person name="Gwinn M.L."/>
            <person name="Haft D.H."/>
            <person name="Hickey E.K."/>
            <person name="Kolonay J.F."/>
            <person name="Nelson W.C."/>
            <person name="Umayam L.A."/>
            <person name="Ermolaeva M.D."/>
            <person name="Salzberg S.L."/>
            <person name="Delcher A."/>
            <person name="Utterback T.R."/>
            <person name="Weidman J.F."/>
            <person name="Khouri H.M."/>
            <person name="Gill J."/>
            <person name="Mikula A."/>
            <person name="Bishai W."/>
            <person name="Jacobs W.R. Jr."/>
            <person name="Venter J.C."/>
            <person name="Fraser C.M."/>
        </authorList>
    </citation>
    <scope>NUCLEOTIDE SEQUENCE [LARGE SCALE GENOMIC DNA]</scope>
    <source>
        <strain>CDC 1551 / Oshkosh</strain>
    </source>
</reference>
<proteinExistence type="inferred from homology"/>
<accession>P9WGX8</accession>
<accession>L0T9L5</accession>
<accession>O05831</accession>
<accession>P67134</accession>